<organism>
    <name type="scientific">Solidesulfovibrio magneticus (strain ATCC 700980 / DSM 13731 / RS-1)</name>
    <name type="common">Desulfovibrio magneticus</name>
    <dbReference type="NCBI Taxonomy" id="573370"/>
    <lineage>
        <taxon>Bacteria</taxon>
        <taxon>Pseudomonadati</taxon>
        <taxon>Thermodesulfobacteriota</taxon>
        <taxon>Desulfovibrionia</taxon>
        <taxon>Desulfovibrionales</taxon>
        <taxon>Desulfovibrionaceae</taxon>
        <taxon>Solidesulfovibrio</taxon>
    </lineage>
</organism>
<gene>
    <name evidence="1" type="primary">hisA</name>
    <name type="ordered locus">DMR_22350</name>
</gene>
<keyword id="KW-0028">Amino-acid biosynthesis</keyword>
<keyword id="KW-0963">Cytoplasm</keyword>
<keyword id="KW-0368">Histidine biosynthesis</keyword>
<keyword id="KW-0413">Isomerase</keyword>
<accession>C4XSN4</accession>
<sequence length="247" mass="25767">MIIFPAVDIKDGQCVRLRQGVADAVTVFSPDPEAMARHWEGLGAKWLHLIDLDGAFSGKPRNFDLIARICSGLSIPVQLGGGVRDAATAAAYLEAGVKRLIIGTLALADPDAFAAICAAHPGRVGVSLDAVDGNLKVKGWVEDSGRTVEDVLPGLSAAGAAFVVYTDISRDGMQSGVNLPALQRLLELTDLPVIAAGGVATLDDVKALYPYGKKGLEGLISGRAIYEGTLDFPAALAYIAEKAKEDA</sequence>
<reference key="1">
    <citation type="journal article" date="2009" name="Genome Res.">
        <title>Whole genome sequence of Desulfovibrio magneticus strain RS-1 revealed common gene clusters in magnetotactic bacteria.</title>
        <authorList>
            <person name="Nakazawa H."/>
            <person name="Arakaki A."/>
            <person name="Narita-Yamada S."/>
            <person name="Yashiro I."/>
            <person name="Jinno K."/>
            <person name="Aoki N."/>
            <person name="Tsuruyama A."/>
            <person name="Okamura Y."/>
            <person name="Tanikawa S."/>
            <person name="Fujita N."/>
            <person name="Takeyama H."/>
            <person name="Matsunaga T."/>
        </authorList>
    </citation>
    <scope>NUCLEOTIDE SEQUENCE [LARGE SCALE GENOMIC DNA]</scope>
    <source>
        <strain>ATCC 700980 / DSM 13731 / RS-1</strain>
    </source>
</reference>
<evidence type="ECO:0000255" key="1">
    <source>
        <dbReference type="HAMAP-Rule" id="MF_01014"/>
    </source>
</evidence>
<name>HIS4_SOLM1</name>
<dbReference type="EC" id="5.3.1.16" evidence="1"/>
<dbReference type="EMBL" id="AP010904">
    <property type="protein sequence ID" value="BAH75726.1"/>
    <property type="molecule type" value="Genomic_DNA"/>
</dbReference>
<dbReference type="RefSeq" id="WP_015860909.1">
    <property type="nucleotide sequence ID" value="NC_012796.1"/>
</dbReference>
<dbReference type="SMR" id="C4XSN4"/>
<dbReference type="STRING" id="573370.DMR_22350"/>
<dbReference type="KEGG" id="dma:DMR_22350"/>
<dbReference type="eggNOG" id="COG0106">
    <property type="taxonomic scope" value="Bacteria"/>
</dbReference>
<dbReference type="HOGENOM" id="CLU_048577_1_1_7"/>
<dbReference type="OrthoDB" id="9807749at2"/>
<dbReference type="UniPathway" id="UPA00031">
    <property type="reaction ID" value="UER00009"/>
</dbReference>
<dbReference type="Proteomes" id="UP000009071">
    <property type="component" value="Chromosome"/>
</dbReference>
<dbReference type="GO" id="GO:0005737">
    <property type="term" value="C:cytoplasm"/>
    <property type="evidence" value="ECO:0007669"/>
    <property type="project" value="UniProtKB-SubCell"/>
</dbReference>
<dbReference type="GO" id="GO:0003949">
    <property type="term" value="F:1-(5-phosphoribosyl)-5-[(5-phosphoribosylamino)methylideneamino]imidazole-4-carboxamide isomerase activity"/>
    <property type="evidence" value="ECO:0007669"/>
    <property type="project" value="UniProtKB-UniRule"/>
</dbReference>
<dbReference type="GO" id="GO:0000105">
    <property type="term" value="P:L-histidine biosynthetic process"/>
    <property type="evidence" value="ECO:0007669"/>
    <property type="project" value="UniProtKB-UniRule"/>
</dbReference>
<dbReference type="GO" id="GO:0000162">
    <property type="term" value="P:L-tryptophan biosynthetic process"/>
    <property type="evidence" value="ECO:0007669"/>
    <property type="project" value="TreeGrafter"/>
</dbReference>
<dbReference type="CDD" id="cd04732">
    <property type="entry name" value="HisA"/>
    <property type="match status" value="1"/>
</dbReference>
<dbReference type="FunFam" id="3.20.20.70:FF:000009">
    <property type="entry name" value="1-(5-phosphoribosyl)-5-[(5-phosphoribosylamino)methylideneamino] imidazole-4-carboxamide isomerase"/>
    <property type="match status" value="1"/>
</dbReference>
<dbReference type="Gene3D" id="3.20.20.70">
    <property type="entry name" value="Aldolase class I"/>
    <property type="match status" value="1"/>
</dbReference>
<dbReference type="HAMAP" id="MF_01014">
    <property type="entry name" value="HisA"/>
    <property type="match status" value="1"/>
</dbReference>
<dbReference type="InterPro" id="IPR013785">
    <property type="entry name" value="Aldolase_TIM"/>
</dbReference>
<dbReference type="InterPro" id="IPR006062">
    <property type="entry name" value="His_biosynth"/>
</dbReference>
<dbReference type="InterPro" id="IPR006063">
    <property type="entry name" value="HisA_bact_arch"/>
</dbReference>
<dbReference type="InterPro" id="IPR044524">
    <property type="entry name" value="Isoase_HisA-like"/>
</dbReference>
<dbReference type="InterPro" id="IPR023016">
    <property type="entry name" value="Isoase_HisA-like_bact"/>
</dbReference>
<dbReference type="InterPro" id="IPR011060">
    <property type="entry name" value="RibuloseP-bd_barrel"/>
</dbReference>
<dbReference type="NCBIfam" id="TIGR00007">
    <property type="entry name" value="1-(5-phosphoribosyl)-5-[(5-phosphoribosylamino)methylideneamino]imidazole-4-carboxamide isomerase"/>
    <property type="match status" value="1"/>
</dbReference>
<dbReference type="PANTHER" id="PTHR43090">
    <property type="entry name" value="1-(5-PHOSPHORIBOSYL)-5-[(5-PHOSPHORIBOSYLAMINO)METHYLIDENEAMINO] IMIDAZOLE-4-CARBOXAMIDE ISOMERASE"/>
    <property type="match status" value="1"/>
</dbReference>
<dbReference type="PANTHER" id="PTHR43090:SF2">
    <property type="entry name" value="1-(5-PHOSPHORIBOSYL)-5-[(5-PHOSPHORIBOSYLAMINO)METHYLIDENEAMINO] IMIDAZOLE-4-CARBOXAMIDE ISOMERASE"/>
    <property type="match status" value="1"/>
</dbReference>
<dbReference type="Pfam" id="PF00977">
    <property type="entry name" value="His_biosynth"/>
    <property type="match status" value="1"/>
</dbReference>
<dbReference type="SUPFAM" id="SSF51366">
    <property type="entry name" value="Ribulose-phoshate binding barrel"/>
    <property type="match status" value="1"/>
</dbReference>
<proteinExistence type="inferred from homology"/>
<comment type="catalytic activity">
    <reaction evidence="1">
        <text>1-(5-phospho-beta-D-ribosyl)-5-[(5-phospho-beta-D-ribosylamino)methylideneamino]imidazole-4-carboxamide = 5-[(5-phospho-1-deoxy-D-ribulos-1-ylimino)methylamino]-1-(5-phospho-beta-D-ribosyl)imidazole-4-carboxamide</text>
        <dbReference type="Rhea" id="RHEA:15469"/>
        <dbReference type="ChEBI" id="CHEBI:58435"/>
        <dbReference type="ChEBI" id="CHEBI:58525"/>
        <dbReference type="EC" id="5.3.1.16"/>
    </reaction>
</comment>
<comment type="pathway">
    <text evidence="1">Amino-acid biosynthesis; L-histidine biosynthesis; L-histidine from 5-phospho-alpha-D-ribose 1-diphosphate: step 4/9.</text>
</comment>
<comment type="subcellular location">
    <subcellularLocation>
        <location evidence="1">Cytoplasm</location>
    </subcellularLocation>
</comment>
<comment type="similarity">
    <text evidence="1">Belongs to the HisA/HisF family.</text>
</comment>
<feature type="chain" id="PRO_1000213225" description="1-(5-phosphoribosyl)-5-[(5-phosphoribosylamino)methylideneamino] imidazole-4-carboxamide isomerase">
    <location>
        <begin position="1"/>
        <end position="247"/>
    </location>
</feature>
<feature type="active site" description="Proton acceptor" evidence="1">
    <location>
        <position position="8"/>
    </location>
</feature>
<feature type="active site" description="Proton donor" evidence="1">
    <location>
        <position position="129"/>
    </location>
</feature>
<protein>
    <recommendedName>
        <fullName evidence="1">1-(5-phosphoribosyl)-5-[(5-phosphoribosylamino)methylideneamino] imidazole-4-carboxamide isomerase</fullName>
        <ecNumber evidence="1">5.3.1.16</ecNumber>
    </recommendedName>
    <alternativeName>
        <fullName evidence="1">Phosphoribosylformimino-5-aminoimidazole carboxamide ribotide isomerase</fullName>
    </alternativeName>
</protein>